<accession>Q87ZR5</accession>
<protein>
    <recommendedName>
        <fullName evidence="1">High frequency lysogenization protein HflD homolog</fullName>
    </recommendedName>
</protein>
<name>HFLD_PSESM</name>
<comment type="subcellular location">
    <subcellularLocation>
        <location>Cytoplasm</location>
    </subcellularLocation>
    <subcellularLocation>
        <location evidence="1">Cell inner membrane</location>
        <topology evidence="1">Peripheral membrane protein</topology>
        <orientation evidence="1">Cytoplasmic side</orientation>
    </subcellularLocation>
</comment>
<comment type="similarity">
    <text evidence="1">Belongs to the HflD family.</text>
</comment>
<proteinExistence type="inferred from homology"/>
<sequence length="206" mass="22954">MTPIQEQLIALGGVFQAAVLVDRIAKTGQVSEAALSCMLGSLLVVDPKDTLDVYGGDDLNLHEGYRAMASALERDPATLQREPLRYALSMLGLERQLAKRDDLLEIIGKRIPVIQSQVEHFGIAHENVIAATGALYEDTLSTLRQRIQVQGDMRNLQQPNNASKIRAILLAGIRSARLWRQVGGHRWQLVFSRRKLLKELYPLLHG</sequence>
<dbReference type="EMBL" id="AE016853">
    <property type="protein sequence ID" value="AAO56837.1"/>
    <property type="molecule type" value="Genomic_DNA"/>
</dbReference>
<dbReference type="RefSeq" id="NP_793142.1">
    <property type="nucleotide sequence ID" value="NC_004578.1"/>
</dbReference>
<dbReference type="RefSeq" id="WP_005767416.1">
    <property type="nucleotide sequence ID" value="NC_004578.1"/>
</dbReference>
<dbReference type="SMR" id="Q87ZR5"/>
<dbReference type="STRING" id="223283.PSPTO_3359"/>
<dbReference type="GeneID" id="61790369"/>
<dbReference type="KEGG" id="pst:PSPTO_3359"/>
<dbReference type="PATRIC" id="fig|223283.9.peg.3438"/>
<dbReference type="eggNOG" id="COG2915">
    <property type="taxonomic scope" value="Bacteria"/>
</dbReference>
<dbReference type="HOGENOM" id="CLU_098920_0_0_6"/>
<dbReference type="OrthoDB" id="9788031at2"/>
<dbReference type="PhylomeDB" id="Q87ZR5"/>
<dbReference type="Proteomes" id="UP000002515">
    <property type="component" value="Chromosome"/>
</dbReference>
<dbReference type="GO" id="GO:0005737">
    <property type="term" value="C:cytoplasm"/>
    <property type="evidence" value="ECO:0007669"/>
    <property type="project" value="UniProtKB-SubCell"/>
</dbReference>
<dbReference type="GO" id="GO:0005886">
    <property type="term" value="C:plasma membrane"/>
    <property type="evidence" value="ECO:0007669"/>
    <property type="project" value="UniProtKB-SubCell"/>
</dbReference>
<dbReference type="Gene3D" id="1.10.3890.10">
    <property type="entry name" value="HflD-like"/>
    <property type="match status" value="1"/>
</dbReference>
<dbReference type="HAMAP" id="MF_00695">
    <property type="entry name" value="HflD_protein"/>
    <property type="match status" value="1"/>
</dbReference>
<dbReference type="InterPro" id="IPR007451">
    <property type="entry name" value="HflD"/>
</dbReference>
<dbReference type="InterPro" id="IPR035932">
    <property type="entry name" value="HflD-like_sf"/>
</dbReference>
<dbReference type="NCBIfam" id="NF001246">
    <property type="entry name" value="PRK00218.1-2"/>
    <property type="match status" value="1"/>
</dbReference>
<dbReference type="NCBIfam" id="NF001247">
    <property type="entry name" value="PRK00218.1-3"/>
    <property type="match status" value="1"/>
</dbReference>
<dbReference type="PANTHER" id="PTHR38100">
    <property type="entry name" value="HIGH FREQUENCY LYSOGENIZATION PROTEIN HFLD"/>
    <property type="match status" value="1"/>
</dbReference>
<dbReference type="PANTHER" id="PTHR38100:SF1">
    <property type="entry name" value="HIGH FREQUENCY LYSOGENIZATION PROTEIN HFLD"/>
    <property type="match status" value="1"/>
</dbReference>
<dbReference type="Pfam" id="PF04356">
    <property type="entry name" value="DUF489"/>
    <property type="match status" value="1"/>
</dbReference>
<dbReference type="SUPFAM" id="SSF101322">
    <property type="entry name" value="YcfC-like"/>
    <property type="match status" value="1"/>
</dbReference>
<keyword id="KW-0997">Cell inner membrane</keyword>
<keyword id="KW-1003">Cell membrane</keyword>
<keyword id="KW-0963">Cytoplasm</keyword>
<keyword id="KW-0472">Membrane</keyword>
<keyword id="KW-1185">Reference proteome</keyword>
<feature type="chain" id="PRO_0000071585" description="High frequency lysogenization protein HflD homolog">
    <location>
        <begin position="1"/>
        <end position="206"/>
    </location>
</feature>
<evidence type="ECO:0000255" key="1">
    <source>
        <dbReference type="HAMAP-Rule" id="MF_00695"/>
    </source>
</evidence>
<organism>
    <name type="scientific">Pseudomonas syringae pv. tomato (strain ATCC BAA-871 / DC3000)</name>
    <dbReference type="NCBI Taxonomy" id="223283"/>
    <lineage>
        <taxon>Bacteria</taxon>
        <taxon>Pseudomonadati</taxon>
        <taxon>Pseudomonadota</taxon>
        <taxon>Gammaproteobacteria</taxon>
        <taxon>Pseudomonadales</taxon>
        <taxon>Pseudomonadaceae</taxon>
        <taxon>Pseudomonas</taxon>
    </lineage>
</organism>
<reference key="1">
    <citation type="journal article" date="2003" name="Proc. Natl. Acad. Sci. U.S.A.">
        <title>The complete genome sequence of the Arabidopsis and tomato pathogen Pseudomonas syringae pv. tomato DC3000.</title>
        <authorList>
            <person name="Buell C.R."/>
            <person name="Joardar V."/>
            <person name="Lindeberg M."/>
            <person name="Selengut J."/>
            <person name="Paulsen I.T."/>
            <person name="Gwinn M.L."/>
            <person name="Dodson R.J."/>
            <person name="DeBoy R.T."/>
            <person name="Durkin A.S."/>
            <person name="Kolonay J.F."/>
            <person name="Madupu R."/>
            <person name="Daugherty S.C."/>
            <person name="Brinkac L.M."/>
            <person name="Beanan M.J."/>
            <person name="Haft D.H."/>
            <person name="Nelson W.C."/>
            <person name="Davidsen T.M."/>
            <person name="Zafar N."/>
            <person name="Zhou L."/>
            <person name="Liu J."/>
            <person name="Yuan Q."/>
            <person name="Khouri H.M."/>
            <person name="Fedorova N.B."/>
            <person name="Tran B."/>
            <person name="Russell D."/>
            <person name="Berry K.J."/>
            <person name="Utterback T.R."/>
            <person name="Van Aken S.E."/>
            <person name="Feldblyum T.V."/>
            <person name="D'Ascenzo M."/>
            <person name="Deng W.-L."/>
            <person name="Ramos A.R."/>
            <person name="Alfano J.R."/>
            <person name="Cartinhour S."/>
            <person name="Chatterjee A.K."/>
            <person name="Delaney T.P."/>
            <person name="Lazarowitz S.G."/>
            <person name="Martin G.B."/>
            <person name="Schneider D.J."/>
            <person name="Tang X."/>
            <person name="Bender C.L."/>
            <person name="White O."/>
            <person name="Fraser C.M."/>
            <person name="Collmer A."/>
        </authorList>
    </citation>
    <scope>NUCLEOTIDE SEQUENCE [LARGE SCALE GENOMIC DNA]</scope>
    <source>
        <strain>ATCC BAA-871 / DC3000</strain>
    </source>
</reference>
<gene>
    <name evidence="1" type="primary">hflD</name>
    <name type="ordered locus">PSPTO_3359</name>
</gene>